<organism>
    <name type="scientific">Methanococcus vannielii (strain ATCC 35089 / DSM 1224 / JCM 13029 / OCM 148 / SB)</name>
    <dbReference type="NCBI Taxonomy" id="406327"/>
    <lineage>
        <taxon>Archaea</taxon>
        <taxon>Methanobacteriati</taxon>
        <taxon>Methanobacteriota</taxon>
        <taxon>Methanomada group</taxon>
        <taxon>Methanococci</taxon>
        <taxon>Methanococcales</taxon>
        <taxon>Methanococcaceae</taxon>
        <taxon>Methanococcus</taxon>
    </lineage>
</organism>
<reference key="1">
    <citation type="submission" date="2007-06" db="EMBL/GenBank/DDBJ databases">
        <title>Complete sequence of Methanococcus vannielii SB.</title>
        <authorList>
            <consortium name="US DOE Joint Genome Institute"/>
            <person name="Copeland A."/>
            <person name="Lucas S."/>
            <person name="Lapidus A."/>
            <person name="Barry K."/>
            <person name="Glavina del Rio T."/>
            <person name="Dalin E."/>
            <person name="Tice H."/>
            <person name="Pitluck S."/>
            <person name="Chain P."/>
            <person name="Malfatti S."/>
            <person name="Shin M."/>
            <person name="Vergez L."/>
            <person name="Schmutz J."/>
            <person name="Larimer F."/>
            <person name="Land M."/>
            <person name="Hauser L."/>
            <person name="Kyrpides N."/>
            <person name="Anderson I."/>
            <person name="Sieprawska-Lupa M."/>
            <person name="Whitman W.B."/>
            <person name="Richardson P."/>
        </authorList>
    </citation>
    <scope>NUCLEOTIDE SEQUENCE [LARGE SCALE GENOMIC DNA]</scope>
    <source>
        <strain>ATCC 35089 / DSM 1224 / JCM 13029 / OCM 148 / SB</strain>
    </source>
</reference>
<accession>A6UQC1</accession>
<feature type="chain" id="PRO_1000074392" description="Cobyrinate a,c-diamide synthase">
    <location>
        <begin position="1"/>
        <end position="447"/>
    </location>
</feature>
<feature type="domain" description="GATase cobBQ-type" evidence="1">
    <location>
        <begin position="252"/>
        <end position="439"/>
    </location>
</feature>
<feature type="active site" description="Nucleophile" evidence="1">
    <location>
        <position position="331"/>
    </location>
</feature>
<feature type="site" description="Increases nucleophilicity of active site Cys" evidence="1">
    <location>
        <position position="431"/>
    </location>
</feature>
<sequence>MKRVVIAGTSSMVGKTTISTGIMNALSKKNNVQPYKVGPDYIDPTYHTKATENTSRNLDSFFMDETQIRSLFKRHSQNKDISIIEGVRGLFEGISPYNDVGSTASVAKTIDSPIILLMDARSLTRSAAAIIKGFKSFDSELNIKGVIFNKIRGDGHLNKLKEAVKYYDGEIEIVGAIKRDENLAVAERHLGLVPTPEKTEELGKQIEFWGDTVLECLDIDKIIEISDVDFEIPVDNKNKDETLWKVDKNSSKIAIAFDESFNFYYHDNFDALKENGAKLEFFSPIHDFEIPNCDILYLGGGYPEIFSKELSKNTSMIESIRNFDGKIYGECGGLMYLTNSINGVDMLKLINADSIMTKNVQGLSYVIGSFKKDCIIGKEKETFKAHEFHYSKLININENDFSYEINRGTGIIDKLDGISIKDGRIVGGYAHQHAVGNPYFASCLSKL</sequence>
<evidence type="ECO:0000255" key="1">
    <source>
        <dbReference type="HAMAP-Rule" id="MF_00027"/>
    </source>
</evidence>
<gene>
    <name evidence="1" type="primary">cbiA</name>
    <name evidence="1" type="synonym">cfbB</name>
    <name type="ordered locus">Mevan_0787</name>
</gene>
<proteinExistence type="inferred from homology"/>
<dbReference type="EC" id="6.3.5.11" evidence="1"/>
<dbReference type="EC" id="6.3.5.12" evidence="1"/>
<dbReference type="EMBL" id="CP000742">
    <property type="protein sequence ID" value="ABR54693.1"/>
    <property type="molecule type" value="Genomic_DNA"/>
</dbReference>
<dbReference type="RefSeq" id="WP_011972595.1">
    <property type="nucleotide sequence ID" value="NC_009634.1"/>
</dbReference>
<dbReference type="STRING" id="406327.Mevan_0787"/>
<dbReference type="GeneID" id="5325174"/>
<dbReference type="KEGG" id="mvn:Mevan_0787"/>
<dbReference type="eggNOG" id="arCOG00106">
    <property type="taxonomic scope" value="Archaea"/>
</dbReference>
<dbReference type="HOGENOM" id="CLU_022752_2_0_2"/>
<dbReference type="OrthoDB" id="8896at2157"/>
<dbReference type="UniPathway" id="UPA00148">
    <property type="reaction ID" value="UER00231"/>
</dbReference>
<dbReference type="Proteomes" id="UP000001107">
    <property type="component" value="Chromosome"/>
</dbReference>
<dbReference type="GO" id="GO:0005524">
    <property type="term" value="F:ATP binding"/>
    <property type="evidence" value="ECO:0007669"/>
    <property type="project" value="UniProtKB-UniRule"/>
</dbReference>
<dbReference type="GO" id="GO:0042242">
    <property type="term" value="F:cobyrinic acid a,c-diamide synthase activity"/>
    <property type="evidence" value="ECO:0007669"/>
    <property type="project" value="UniProtKB-UniRule"/>
</dbReference>
<dbReference type="GO" id="GO:0009236">
    <property type="term" value="P:cobalamin biosynthetic process"/>
    <property type="evidence" value="ECO:0007669"/>
    <property type="project" value="UniProtKB-UniRule"/>
</dbReference>
<dbReference type="GO" id="GO:0015948">
    <property type="term" value="P:methanogenesis"/>
    <property type="evidence" value="ECO:0007669"/>
    <property type="project" value="UniProtKB-KW"/>
</dbReference>
<dbReference type="CDD" id="cd05388">
    <property type="entry name" value="CobB_N"/>
    <property type="match status" value="1"/>
</dbReference>
<dbReference type="CDD" id="cd03130">
    <property type="entry name" value="GATase1_CobB"/>
    <property type="match status" value="1"/>
</dbReference>
<dbReference type="Gene3D" id="3.40.50.880">
    <property type="match status" value="1"/>
</dbReference>
<dbReference type="Gene3D" id="3.40.50.300">
    <property type="entry name" value="P-loop containing nucleotide triphosphate hydrolases"/>
    <property type="match status" value="1"/>
</dbReference>
<dbReference type="HAMAP" id="MF_00027">
    <property type="entry name" value="CobB_CbiA"/>
    <property type="match status" value="1"/>
</dbReference>
<dbReference type="InterPro" id="IPR004484">
    <property type="entry name" value="CbiA/CobB_synth"/>
</dbReference>
<dbReference type="InterPro" id="IPR029062">
    <property type="entry name" value="Class_I_gatase-like"/>
</dbReference>
<dbReference type="InterPro" id="IPR002586">
    <property type="entry name" value="CobQ/CobB/MinD/ParA_Nub-bd_dom"/>
</dbReference>
<dbReference type="InterPro" id="IPR011698">
    <property type="entry name" value="GATase_3"/>
</dbReference>
<dbReference type="InterPro" id="IPR027417">
    <property type="entry name" value="P-loop_NTPase"/>
</dbReference>
<dbReference type="NCBIfam" id="TIGR00379">
    <property type="entry name" value="cobB"/>
    <property type="match status" value="1"/>
</dbReference>
<dbReference type="NCBIfam" id="NF033195">
    <property type="entry name" value="F430_CfbB"/>
    <property type="match status" value="1"/>
</dbReference>
<dbReference type="NCBIfam" id="NF002204">
    <property type="entry name" value="PRK01077.1"/>
    <property type="match status" value="1"/>
</dbReference>
<dbReference type="PANTHER" id="PTHR43873">
    <property type="entry name" value="COBYRINATE A,C-DIAMIDE SYNTHASE"/>
    <property type="match status" value="1"/>
</dbReference>
<dbReference type="PANTHER" id="PTHR43873:SF1">
    <property type="entry name" value="COBYRINATE A,C-DIAMIDE SYNTHASE"/>
    <property type="match status" value="1"/>
</dbReference>
<dbReference type="Pfam" id="PF01656">
    <property type="entry name" value="CbiA"/>
    <property type="match status" value="1"/>
</dbReference>
<dbReference type="Pfam" id="PF07685">
    <property type="entry name" value="GATase_3"/>
    <property type="match status" value="1"/>
</dbReference>
<dbReference type="SUPFAM" id="SSF52317">
    <property type="entry name" value="Class I glutamine amidotransferase-like"/>
    <property type="match status" value="1"/>
</dbReference>
<dbReference type="SUPFAM" id="SSF52540">
    <property type="entry name" value="P-loop containing nucleoside triphosphate hydrolases"/>
    <property type="match status" value="1"/>
</dbReference>
<dbReference type="PROSITE" id="PS51274">
    <property type="entry name" value="GATASE_COBBQ"/>
    <property type="match status" value="1"/>
</dbReference>
<name>CBIA_METVS</name>
<comment type="function">
    <text evidence="1">Catalyzes the ATP-dependent amidation of the two carboxylate groups at positions a and c of cobyrinate, using either L-glutamine or ammonia as the nitrogen source. Involved in the biosynthesis of the unique nickel-containing tetrapyrrole coenzyme F430, the prosthetic group of methyl-coenzyme M reductase (MCR), which plays a key role in methanogenesis and anaerobic methane oxidation. Catalyzes the ATP-dependent amidation of the two carboxylate groups at positions a and c of Ni-sirohydrochlorin, using L-glutamine or ammonia as the nitrogen source.</text>
</comment>
<comment type="catalytic activity">
    <reaction evidence="1">
        <text>cob(II)yrinate + 2 L-glutamine + 2 ATP + 2 H2O = cob(II)yrinate a,c diamide + 2 L-glutamate + 2 ADP + 2 phosphate + 2 H(+)</text>
        <dbReference type="Rhea" id="RHEA:26289"/>
        <dbReference type="ChEBI" id="CHEBI:15377"/>
        <dbReference type="ChEBI" id="CHEBI:15378"/>
        <dbReference type="ChEBI" id="CHEBI:29985"/>
        <dbReference type="ChEBI" id="CHEBI:30616"/>
        <dbReference type="ChEBI" id="CHEBI:43474"/>
        <dbReference type="ChEBI" id="CHEBI:58359"/>
        <dbReference type="ChEBI" id="CHEBI:58537"/>
        <dbReference type="ChEBI" id="CHEBI:58894"/>
        <dbReference type="ChEBI" id="CHEBI:456216"/>
        <dbReference type="EC" id="6.3.5.11"/>
    </reaction>
</comment>
<comment type="catalytic activity">
    <reaction evidence="1">
        <text>Ni-sirohydrochlorin + 2 L-glutamine + 2 ATP + 2 H2O = Ni-sirohydrochlorin a,c-diamide + 2 L-glutamate + 2 ADP + 2 phosphate + 2 H(+)</text>
        <dbReference type="Rhea" id="RHEA:52896"/>
        <dbReference type="ChEBI" id="CHEBI:15377"/>
        <dbReference type="ChEBI" id="CHEBI:15378"/>
        <dbReference type="ChEBI" id="CHEBI:29985"/>
        <dbReference type="ChEBI" id="CHEBI:30616"/>
        <dbReference type="ChEBI" id="CHEBI:43474"/>
        <dbReference type="ChEBI" id="CHEBI:58359"/>
        <dbReference type="ChEBI" id="CHEBI:136841"/>
        <dbReference type="ChEBI" id="CHEBI:136887"/>
        <dbReference type="ChEBI" id="CHEBI:456216"/>
        <dbReference type="EC" id="6.3.5.12"/>
    </reaction>
</comment>
<comment type="cofactor">
    <cofactor evidence="1">
        <name>Mg(2+)</name>
        <dbReference type="ChEBI" id="CHEBI:18420"/>
    </cofactor>
</comment>
<comment type="pathway">
    <text evidence="1">Cofactor biosynthesis; adenosylcobalamin biosynthesis; cob(II)yrinate a,c-diamide from sirohydrochlorin (anaerobic route): step 10/10.</text>
</comment>
<comment type="domain">
    <text evidence="1">Comprises of two domains. The C-terminal domain contains the binding site for glutamine and catalyzes the hydrolysis of this substrate to glutamate and ammonia. The N-terminal domain is anticipated to bind ATP, and cobyrinate or Ni-sirohydrochlorin, and catalyzes the ultimate synthesis of the diamide product. The ammonia produced via the glutaminase domain is probably translocated to the adjacent domain via a molecular tunnel, where it reacts with an activated intermediate.</text>
</comment>
<comment type="miscellaneous">
    <text evidence="1">The a and c carboxylates of cobyrinate and Ni-sirohydrochlorin are activated for nucleophilic attack via formation of a phosphorylated intermediate by ATP. CbiA catalyzes first the amidation of the c-carboxylate, and then that of the a-carboxylate.</text>
</comment>
<comment type="similarity">
    <text evidence="1">Belongs to the CobB/CbiA family.</text>
</comment>
<protein>
    <recommendedName>
        <fullName evidence="1">Cobyrinate a,c-diamide synthase</fullName>
        <ecNumber evidence="1">6.3.5.11</ecNumber>
    </recommendedName>
    <alternativeName>
        <fullName evidence="1">Cobyrinic acid a,c-diamide synthetase</fullName>
    </alternativeName>
    <alternativeName>
        <fullName evidence="1">Ni-sirohydrochlorin a,c-diamide synthase</fullName>
        <ecNumber evidence="1">6.3.5.12</ecNumber>
    </alternativeName>
    <alternativeName>
        <fullName evidence="1">Ni-sirohydrochlorin a,c-diamide synthetase</fullName>
    </alternativeName>
</protein>
<keyword id="KW-0067">ATP-binding</keyword>
<keyword id="KW-0169">Cobalamin biosynthesis</keyword>
<keyword id="KW-0315">Glutamine amidotransferase</keyword>
<keyword id="KW-0436">Ligase</keyword>
<keyword id="KW-0460">Magnesium</keyword>
<keyword id="KW-0484">Methanogenesis</keyword>
<keyword id="KW-0547">Nucleotide-binding</keyword>